<feature type="chain" id="PRO_0000094833" description="Dual specificity protein phosphatase 19">
    <location>
        <begin position="1"/>
        <end position="220"/>
    </location>
</feature>
<feature type="domain" description="Tyrosine-protein phosphatase" evidence="2">
    <location>
        <begin position="64"/>
        <end position="205"/>
    </location>
</feature>
<feature type="active site" description="Phosphocysteine intermediate" evidence="2">
    <location>
        <position position="149"/>
    </location>
</feature>
<feature type="modified residue" description="N-acetylmethionine" evidence="1">
    <location>
        <position position="1"/>
    </location>
</feature>
<reference key="1">
    <citation type="journal article" date="2002" name="J. Biol. Chem.">
        <title>A novel dual specificity phosphatase SKRP1 interacts with the MAPK kinase MKK7 and inactivates the JNK MAPK pathway. Implication for the precise regulation of the particular MAPK pathway.</title>
        <authorList>
            <person name="Zama T."/>
            <person name="Aoki R."/>
            <person name="Kamimoto T."/>
            <person name="Inoue K."/>
            <person name="Ikeda Y."/>
            <person name="Hagiwara M."/>
        </authorList>
    </citation>
    <scope>NUCLEOTIDE SEQUENCE [MRNA]</scope>
</reference>
<proteinExistence type="evidence at transcript level"/>
<keyword id="KW-0007">Acetylation</keyword>
<keyword id="KW-0378">Hydrolase</keyword>
<keyword id="KW-0904">Protein phosphatase</keyword>
<keyword id="KW-1185">Reference proteome</keyword>
<accession>Q8K4T5</accession>
<evidence type="ECO:0000250" key="1">
    <source>
        <dbReference type="UniProtKB" id="Q8WTR2"/>
    </source>
</evidence>
<evidence type="ECO:0000255" key="2">
    <source>
        <dbReference type="PROSITE-ProRule" id="PRU00160"/>
    </source>
</evidence>
<evidence type="ECO:0000305" key="3"/>
<evidence type="ECO:0000312" key="4">
    <source>
        <dbReference type="MGI" id="MGI:1915332"/>
    </source>
</evidence>
<protein>
    <recommendedName>
        <fullName>Dual specificity protein phosphatase 19</fullName>
        <ecNumber evidence="1">3.1.3.16</ecNumber>
        <ecNumber evidence="1">3.1.3.48</ecNumber>
    </recommendedName>
    <alternativeName>
        <fullName>Protein phosphatase SKRP1</fullName>
    </alternativeName>
    <alternativeName>
        <fullName>Stress-activated protein kinase pathway-regulating phosphatase 1</fullName>
    </alternativeName>
</protein>
<organism>
    <name type="scientific">Mus musculus</name>
    <name type="common">Mouse</name>
    <dbReference type="NCBI Taxonomy" id="10090"/>
    <lineage>
        <taxon>Eukaryota</taxon>
        <taxon>Metazoa</taxon>
        <taxon>Chordata</taxon>
        <taxon>Craniata</taxon>
        <taxon>Vertebrata</taxon>
        <taxon>Euteleostomi</taxon>
        <taxon>Mammalia</taxon>
        <taxon>Eutheria</taxon>
        <taxon>Euarchontoglires</taxon>
        <taxon>Glires</taxon>
        <taxon>Rodentia</taxon>
        <taxon>Myomorpha</taxon>
        <taxon>Muroidea</taxon>
        <taxon>Muridae</taxon>
        <taxon>Murinae</taxon>
        <taxon>Mus</taxon>
        <taxon>Mus</taxon>
    </lineage>
</organism>
<gene>
    <name evidence="4" type="primary">Dusp19</name>
    <name type="synonym">Skrp1</name>
</gene>
<name>DUS19_MOUSE</name>
<dbReference type="EC" id="3.1.3.16" evidence="1"/>
<dbReference type="EC" id="3.1.3.48" evidence="1"/>
<dbReference type="EMBL" id="AB051896">
    <property type="protein sequence ID" value="BAC01163.1"/>
    <property type="molecule type" value="mRNA"/>
</dbReference>
<dbReference type="CCDS" id="CCDS16178.1"/>
<dbReference type="SMR" id="Q8K4T5"/>
<dbReference type="FunCoup" id="Q8K4T5">
    <property type="interactions" value="810"/>
</dbReference>
<dbReference type="STRING" id="10090.ENSMUSP00000028384"/>
<dbReference type="PhosphoSitePlus" id="Q8K4T5"/>
<dbReference type="PaxDb" id="10090-ENSMUSP00000028384"/>
<dbReference type="ProteomicsDB" id="277414"/>
<dbReference type="AGR" id="MGI:1915332"/>
<dbReference type="MGI" id="MGI:1915332">
    <property type="gene designation" value="Dusp19"/>
</dbReference>
<dbReference type="eggNOG" id="KOG1716">
    <property type="taxonomic scope" value="Eukaryota"/>
</dbReference>
<dbReference type="InParanoid" id="Q8K4T5"/>
<dbReference type="PhylomeDB" id="Q8K4T5"/>
<dbReference type="ChiTaRS" id="Dusp19">
    <property type="organism name" value="mouse"/>
</dbReference>
<dbReference type="PRO" id="PR:Q8K4T5"/>
<dbReference type="Proteomes" id="UP000000589">
    <property type="component" value="Unplaced"/>
</dbReference>
<dbReference type="RNAct" id="Q8K4T5">
    <property type="molecule type" value="protein"/>
</dbReference>
<dbReference type="GO" id="GO:0005737">
    <property type="term" value="C:cytoplasm"/>
    <property type="evidence" value="ECO:0000314"/>
    <property type="project" value="MGI"/>
</dbReference>
<dbReference type="GO" id="GO:0008579">
    <property type="term" value="F:JUN kinase phosphatase activity"/>
    <property type="evidence" value="ECO:0000314"/>
    <property type="project" value="MGI"/>
</dbReference>
<dbReference type="GO" id="GO:0005078">
    <property type="term" value="F:MAP-kinase scaffold activity"/>
    <property type="evidence" value="ECO:0000314"/>
    <property type="project" value="BHF-UCL"/>
</dbReference>
<dbReference type="GO" id="GO:0031434">
    <property type="term" value="F:mitogen-activated protein kinase kinase binding"/>
    <property type="evidence" value="ECO:0000353"/>
    <property type="project" value="BHF-UCL"/>
</dbReference>
<dbReference type="GO" id="GO:0031435">
    <property type="term" value="F:mitogen-activated protein kinase kinase kinase binding"/>
    <property type="evidence" value="ECO:0000353"/>
    <property type="project" value="BHF-UCL"/>
</dbReference>
<dbReference type="GO" id="GO:0030295">
    <property type="term" value="F:protein kinase activator activity"/>
    <property type="evidence" value="ECO:0000314"/>
    <property type="project" value="BHF-UCL"/>
</dbReference>
<dbReference type="GO" id="GO:0004860">
    <property type="term" value="F:protein kinase inhibitor activity"/>
    <property type="evidence" value="ECO:0000314"/>
    <property type="project" value="BHF-UCL"/>
</dbReference>
<dbReference type="GO" id="GO:0004722">
    <property type="term" value="F:protein serine/threonine phosphatase activity"/>
    <property type="evidence" value="ECO:0007669"/>
    <property type="project" value="UniProtKB-EC"/>
</dbReference>
<dbReference type="GO" id="GO:0004725">
    <property type="term" value="F:protein tyrosine phosphatase activity"/>
    <property type="evidence" value="ECO:0007669"/>
    <property type="project" value="UniProtKB-EC"/>
</dbReference>
<dbReference type="GO" id="GO:0008138">
    <property type="term" value="F:protein tyrosine/serine/threonine phosphatase activity"/>
    <property type="evidence" value="ECO:0000314"/>
    <property type="project" value="MGI"/>
</dbReference>
<dbReference type="GO" id="GO:0008330">
    <property type="term" value="F:protein tyrosine/threonine phosphatase activity"/>
    <property type="evidence" value="ECO:0000314"/>
    <property type="project" value="MGI"/>
</dbReference>
<dbReference type="GO" id="GO:0007254">
    <property type="term" value="P:JNK cascade"/>
    <property type="evidence" value="ECO:0000314"/>
    <property type="project" value="MGI"/>
</dbReference>
<dbReference type="GO" id="GO:0046329">
    <property type="term" value="P:negative regulation of JNK cascade"/>
    <property type="evidence" value="ECO:0000314"/>
    <property type="project" value="BHF-UCL"/>
</dbReference>
<dbReference type="GO" id="GO:0043409">
    <property type="term" value="P:negative regulation of MAPK cascade"/>
    <property type="evidence" value="ECO:0000314"/>
    <property type="project" value="MGI"/>
</dbReference>
<dbReference type="GO" id="GO:0046330">
    <property type="term" value="P:positive regulation of JNK cascade"/>
    <property type="evidence" value="ECO:0000314"/>
    <property type="project" value="BHF-UCL"/>
</dbReference>
<dbReference type="GO" id="GO:0043410">
    <property type="term" value="P:positive regulation of MAPK cascade"/>
    <property type="evidence" value="ECO:0000314"/>
    <property type="project" value="BHF-UCL"/>
</dbReference>
<dbReference type="CDD" id="cd14523">
    <property type="entry name" value="DSP_DUSP19"/>
    <property type="match status" value="1"/>
</dbReference>
<dbReference type="FunFam" id="3.90.190.10:FF:000071">
    <property type="entry name" value="Dual specificity protein phosphatase 19"/>
    <property type="match status" value="1"/>
</dbReference>
<dbReference type="Gene3D" id="3.90.190.10">
    <property type="entry name" value="Protein tyrosine phosphatase superfamily"/>
    <property type="match status" value="1"/>
</dbReference>
<dbReference type="InterPro" id="IPR000340">
    <property type="entry name" value="Dual-sp_phosphatase_cat-dom"/>
</dbReference>
<dbReference type="InterPro" id="IPR029021">
    <property type="entry name" value="Prot-tyrosine_phosphatase-like"/>
</dbReference>
<dbReference type="InterPro" id="IPR000387">
    <property type="entry name" value="Tyr_Pase_dom"/>
</dbReference>
<dbReference type="InterPro" id="IPR020422">
    <property type="entry name" value="TYR_PHOSPHATASE_DUAL_dom"/>
</dbReference>
<dbReference type="PANTHER" id="PTHR46377">
    <property type="entry name" value="DUAL SPECIFICITY PROTEIN PHOSPHATASE 19"/>
    <property type="match status" value="1"/>
</dbReference>
<dbReference type="PANTHER" id="PTHR46377:SF1">
    <property type="entry name" value="DUAL SPECIFICITY PROTEIN PHOSPHATASE 19"/>
    <property type="match status" value="1"/>
</dbReference>
<dbReference type="Pfam" id="PF00782">
    <property type="entry name" value="DSPc"/>
    <property type="match status" value="1"/>
</dbReference>
<dbReference type="PRINTS" id="PR01908">
    <property type="entry name" value="ADSPHPHTASE"/>
</dbReference>
<dbReference type="SMART" id="SM00195">
    <property type="entry name" value="DSPc"/>
    <property type="match status" value="1"/>
</dbReference>
<dbReference type="SUPFAM" id="SSF52799">
    <property type="entry name" value="(Phosphotyrosine protein) phosphatases II"/>
    <property type="match status" value="1"/>
</dbReference>
<dbReference type="PROSITE" id="PS50056">
    <property type="entry name" value="TYR_PHOSPHATASE_2"/>
    <property type="match status" value="1"/>
</dbReference>
<dbReference type="PROSITE" id="PS50054">
    <property type="entry name" value="TYR_PHOSPHATASE_DUAL"/>
    <property type="match status" value="1"/>
</dbReference>
<sequence>MHSLNQKIKAFSRDNLRKQCTRVTTLTGKKLIETWEDATVHVVETEPSGGGGCGYVQDLTLDLQVGVIKPWLLLGSQDAAHDLELLRKHKVTHILNVAYGVENAFLSEFTYKTISILDVPETNILSYFPECFEFIEQAKLKDGVVLVHCNAGVSRAAAIVIGFLMSSEEATFTTALSLVKEARPSICPNPGFMEQLRTYQVGKESNGGDKVPAEDTTHGL</sequence>
<comment type="function">
    <text evidence="1">Has a dual specificity toward Ser/Thr and Tyr-containing proteins.</text>
</comment>
<comment type="catalytic activity">
    <reaction evidence="1">
        <text>O-phospho-L-tyrosyl-[protein] + H2O = L-tyrosyl-[protein] + phosphate</text>
        <dbReference type="Rhea" id="RHEA:10684"/>
        <dbReference type="Rhea" id="RHEA-COMP:10136"/>
        <dbReference type="Rhea" id="RHEA-COMP:20101"/>
        <dbReference type="ChEBI" id="CHEBI:15377"/>
        <dbReference type="ChEBI" id="CHEBI:43474"/>
        <dbReference type="ChEBI" id="CHEBI:46858"/>
        <dbReference type="ChEBI" id="CHEBI:61978"/>
        <dbReference type="EC" id="3.1.3.48"/>
    </reaction>
    <physiologicalReaction direction="left-to-right" evidence="1">
        <dbReference type="Rhea" id="RHEA:10685"/>
    </physiologicalReaction>
</comment>
<comment type="catalytic activity">
    <reaction evidence="1">
        <text>O-phospho-L-seryl-[protein] + H2O = L-seryl-[protein] + phosphate</text>
        <dbReference type="Rhea" id="RHEA:20629"/>
        <dbReference type="Rhea" id="RHEA-COMP:9863"/>
        <dbReference type="Rhea" id="RHEA-COMP:11604"/>
        <dbReference type="ChEBI" id="CHEBI:15377"/>
        <dbReference type="ChEBI" id="CHEBI:29999"/>
        <dbReference type="ChEBI" id="CHEBI:43474"/>
        <dbReference type="ChEBI" id="CHEBI:83421"/>
        <dbReference type="EC" id="3.1.3.16"/>
    </reaction>
    <physiologicalReaction direction="left-to-right" evidence="1">
        <dbReference type="Rhea" id="RHEA:20630"/>
    </physiologicalReaction>
</comment>
<comment type="catalytic activity">
    <reaction evidence="1">
        <text>O-phospho-L-threonyl-[protein] + H2O = L-threonyl-[protein] + phosphate</text>
        <dbReference type="Rhea" id="RHEA:47004"/>
        <dbReference type="Rhea" id="RHEA-COMP:11060"/>
        <dbReference type="Rhea" id="RHEA-COMP:11605"/>
        <dbReference type="ChEBI" id="CHEBI:15377"/>
        <dbReference type="ChEBI" id="CHEBI:30013"/>
        <dbReference type="ChEBI" id="CHEBI:43474"/>
        <dbReference type="ChEBI" id="CHEBI:61977"/>
        <dbReference type="EC" id="3.1.3.16"/>
    </reaction>
    <physiologicalReaction direction="left-to-right" evidence="1">
        <dbReference type="Rhea" id="RHEA:47005"/>
    </physiologicalReaction>
</comment>
<comment type="activity regulation">
    <text evidence="1">Phosphatase activity is enhanced by Ca(2+) and Mn(2+).</text>
</comment>
<comment type="similarity">
    <text evidence="3">Belongs to the protein-tyrosine phosphatase family. Non-receptor class dual specificity subfamily.</text>
</comment>